<evidence type="ECO:0000255" key="1">
    <source>
        <dbReference type="HAMAP-Rule" id="MF_00182"/>
    </source>
</evidence>
<name>FMT_THEAB</name>
<feature type="chain" id="PRO_1000118487" description="Methionyl-tRNA formyltransferase">
    <location>
        <begin position="1"/>
        <end position="304"/>
    </location>
</feature>
<feature type="binding site" evidence="1">
    <location>
        <begin position="106"/>
        <end position="109"/>
    </location>
    <ligand>
        <name>(6S)-5,6,7,8-tetrahydrofolate</name>
        <dbReference type="ChEBI" id="CHEBI:57453"/>
    </ligand>
</feature>
<comment type="function">
    <text evidence="1">Attaches a formyl group to the free amino group of methionyl-tRNA(fMet). The formyl group appears to play a dual role in the initiator identity of N-formylmethionyl-tRNA by promoting its recognition by IF2 and preventing the misappropriation of this tRNA by the elongation apparatus.</text>
</comment>
<comment type="catalytic activity">
    <reaction evidence="1">
        <text>L-methionyl-tRNA(fMet) + (6R)-10-formyltetrahydrofolate = N-formyl-L-methionyl-tRNA(fMet) + (6S)-5,6,7,8-tetrahydrofolate + H(+)</text>
        <dbReference type="Rhea" id="RHEA:24380"/>
        <dbReference type="Rhea" id="RHEA-COMP:9952"/>
        <dbReference type="Rhea" id="RHEA-COMP:9953"/>
        <dbReference type="ChEBI" id="CHEBI:15378"/>
        <dbReference type="ChEBI" id="CHEBI:57453"/>
        <dbReference type="ChEBI" id="CHEBI:78530"/>
        <dbReference type="ChEBI" id="CHEBI:78844"/>
        <dbReference type="ChEBI" id="CHEBI:195366"/>
        <dbReference type="EC" id="2.1.2.9"/>
    </reaction>
</comment>
<comment type="similarity">
    <text evidence="1">Belongs to the Fmt family.</text>
</comment>
<accession>B7IFU7</accession>
<sequence length="304" mass="33674">MRILFLGTPSFASEHLEFLIKNNFDVVAVISQPDKPKGRGKKVQPTPVKEVAQKYNIPVFQPTKLTSEGLSIIERYKPDLGIVVAYGKLLKPPFLNAIPFYNIHASLLPKYRGAAPIQRALENGESVTGITIFKIGEGMDDGPIALKKEISVGEFETFGSLYEKLLSLGKEALLEFLNNYPPNLYPQEGVPTYAPKISKEDLELDFSADYVTVKNKIRAYDPIPGVRSVLKGKIVKLFQVFYVEADENIKEYGKVLKINNEGGFISAKGGIVGIKYIQFPGKKPITFLDAKNGGLVKEGDKFES</sequence>
<keyword id="KW-0648">Protein biosynthesis</keyword>
<keyword id="KW-1185">Reference proteome</keyword>
<keyword id="KW-0808">Transferase</keyword>
<proteinExistence type="inferred from homology"/>
<organism>
    <name type="scientific">Thermosipho africanus (strain TCF52B)</name>
    <dbReference type="NCBI Taxonomy" id="484019"/>
    <lineage>
        <taxon>Bacteria</taxon>
        <taxon>Thermotogati</taxon>
        <taxon>Thermotogota</taxon>
        <taxon>Thermotogae</taxon>
        <taxon>Thermotogales</taxon>
        <taxon>Fervidobacteriaceae</taxon>
        <taxon>Thermosipho</taxon>
    </lineage>
</organism>
<reference key="1">
    <citation type="journal article" date="2009" name="J. Bacteriol.">
        <title>The genome of Thermosipho africanus TCF52B: lateral genetic connections to the Firmicutes and Archaea.</title>
        <authorList>
            <person name="Nesboe C.L."/>
            <person name="Bapteste E."/>
            <person name="Curtis B."/>
            <person name="Dahle H."/>
            <person name="Lopez P."/>
            <person name="Macleod D."/>
            <person name="Dlutek M."/>
            <person name="Bowman S."/>
            <person name="Zhaxybayeva O."/>
            <person name="Birkeland N.-K."/>
            <person name="Doolittle W.F."/>
        </authorList>
    </citation>
    <scope>NUCLEOTIDE SEQUENCE [LARGE SCALE GENOMIC DNA]</scope>
    <source>
        <strain>TCF52B</strain>
    </source>
</reference>
<protein>
    <recommendedName>
        <fullName evidence="1">Methionyl-tRNA formyltransferase</fullName>
        <ecNumber evidence="1">2.1.2.9</ecNumber>
    </recommendedName>
</protein>
<dbReference type="EC" id="2.1.2.9" evidence="1"/>
<dbReference type="EMBL" id="CP001185">
    <property type="protein sequence ID" value="ACJ74961.1"/>
    <property type="molecule type" value="Genomic_DNA"/>
</dbReference>
<dbReference type="RefSeq" id="WP_012579599.1">
    <property type="nucleotide sequence ID" value="NC_011653.1"/>
</dbReference>
<dbReference type="SMR" id="B7IFU7"/>
<dbReference type="STRING" id="484019.THA_470"/>
<dbReference type="KEGG" id="taf:THA_470"/>
<dbReference type="eggNOG" id="COG0223">
    <property type="taxonomic scope" value="Bacteria"/>
</dbReference>
<dbReference type="HOGENOM" id="CLU_033347_1_1_0"/>
<dbReference type="OrthoDB" id="9802815at2"/>
<dbReference type="Proteomes" id="UP000002453">
    <property type="component" value="Chromosome"/>
</dbReference>
<dbReference type="GO" id="GO:0005829">
    <property type="term" value="C:cytosol"/>
    <property type="evidence" value="ECO:0007669"/>
    <property type="project" value="TreeGrafter"/>
</dbReference>
<dbReference type="GO" id="GO:0004479">
    <property type="term" value="F:methionyl-tRNA formyltransferase activity"/>
    <property type="evidence" value="ECO:0007669"/>
    <property type="project" value="UniProtKB-UniRule"/>
</dbReference>
<dbReference type="CDD" id="cd08646">
    <property type="entry name" value="FMT_core_Met-tRNA-FMT_N"/>
    <property type="match status" value="1"/>
</dbReference>
<dbReference type="CDD" id="cd08704">
    <property type="entry name" value="Met_tRNA_FMT_C"/>
    <property type="match status" value="1"/>
</dbReference>
<dbReference type="Gene3D" id="3.40.50.12230">
    <property type="match status" value="1"/>
</dbReference>
<dbReference type="HAMAP" id="MF_00182">
    <property type="entry name" value="Formyl_trans"/>
    <property type="match status" value="1"/>
</dbReference>
<dbReference type="InterPro" id="IPR005794">
    <property type="entry name" value="Fmt"/>
</dbReference>
<dbReference type="InterPro" id="IPR005793">
    <property type="entry name" value="Formyl_trans_C"/>
</dbReference>
<dbReference type="InterPro" id="IPR002376">
    <property type="entry name" value="Formyl_transf_N"/>
</dbReference>
<dbReference type="InterPro" id="IPR036477">
    <property type="entry name" value="Formyl_transf_N_sf"/>
</dbReference>
<dbReference type="InterPro" id="IPR011034">
    <property type="entry name" value="Formyl_transferase-like_C_sf"/>
</dbReference>
<dbReference type="InterPro" id="IPR044135">
    <property type="entry name" value="Met-tRNA-FMT_C"/>
</dbReference>
<dbReference type="InterPro" id="IPR041711">
    <property type="entry name" value="Met-tRNA-FMT_N"/>
</dbReference>
<dbReference type="NCBIfam" id="TIGR00460">
    <property type="entry name" value="fmt"/>
    <property type="match status" value="1"/>
</dbReference>
<dbReference type="PANTHER" id="PTHR11138">
    <property type="entry name" value="METHIONYL-TRNA FORMYLTRANSFERASE"/>
    <property type="match status" value="1"/>
</dbReference>
<dbReference type="PANTHER" id="PTHR11138:SF5">
    <property type="entry name" value="METHIONYL-TRNA FORMYLTRANSFERASE, MITOCHONDRIAL"/>
    <property type="match status" value="1"/>
</dbReference>
<dbReference type="Pfam" id="PF02911">
    <property type="entry name" value="Formyl_trans_C"/>
    <property type="match status" value="1"/>
</dbReference>
<dbReference type="Pfam" id="PF00551">
    <property type="entry name" value="Formyl_trans_N"/>
    <property type="match status" value="1"/>
</dbReference>
<dbReference type="SUPFAM" id="SSF50486">
    <property type="entry name" value="FMT C-terminal domain-like"/>
    <property type="match status" value="1"/>
</dbReference>
<dbReference type="SUPFAM" id="SSF53328">
    <property type="entry name" value="Formyltransferase"/>
    <property type="match status" value="1"/>
</dbReference>
<gene>
    <name evidence="1" type="primary">fmt</name>
    <name type="ordered locus">THA_470</name>
</gene>